<reference key="1">
    <citation type="journal article" date="1995" name="Plant Mol. Biol. Rep.">
        <title>Complete nucleotide sequence of the Porphyra purpurea chloroplast genome.</title>
        <authorList>
            <person name="Reith M.E."/>
            <person name="Munholland J."/>
        </authorList>
    </citation>
    <scope>NUCLEOTIDE SEQUENCE [LARGE SCALE GENOMIC DNA]</scope>
    <source>
        <strain>Avonport</strain>
    </source>
</reference>
<proteinExistence type="inferred from homology"/>
<comment type="function">
    <text evidence="1">One of the components of the core complex of photosystem II (PSII), required for its stability and/or assembly. PSII is a light-driven water:plastoquinone oxidoreductase that uses light energy to abstract electrons from H(2)O, generating O(2) and a proton gradient subsequently used for ATP formation. It consists of a core antenna complex that captures photons, and an electron transfer chain that converts photonic excitation into a charge separation.</text>
</comment>
<comment type="subunit">
    <text evidence="1">PSII is composed of 1 copy each of membrane proteins PsbA, PsbB, PsbC, PsbD, PsbE, PsbF, PsbH, PsbI, PsbJ, PsbK, PsbL, PsbM, PsbT, PsbX, PsbY, PsbZ, Psb30/Ycf12, at least 3 peripheral proteins of the oxygen-evolving complex and a large number of cofactors. It forms dimeric complexes.</text>
</comment>
<comment type="subcellular location">
    <subcellularLocation>
        <location evidence="1">Plastid</location>
        <location evidence="1">Chloroplast thylakoid membrane</location>
        <topology evidence="1">Single-pass membrane protein</topology>
    </subcellularLocation>
</comment>
<comment type="similarity">
    <text evidence="1">Belongs to the PsbI family.</text>
</comment>
<protein>
    <recommendedName>
        <fullName evidence="1">Photosystem II reaction center protein I</fullName>
        <shortName evidence="1">PSII-I</shortName>
    </recommendedName>
    <alternativeName>
        <fullName evidence="1">PSII 4.8 kDa protein</fullName>
    </alternativeName>
</protein>
<sequence length="38" mass="4518">MFTLKIFVYTTVIFFISLFVFGFLSNDPSRNPNRKDLE</sequence>
<keyword id="KW-0150">Chloroplast</keyword>
<keyword id="KW-0472">Membrane</keyword>
<keyword id="KW-0602">Photosynthesis</keyword>
<keyword id="KW-0604">Photosystem II</keyword>
<keyword id="KW-0934">Plastid</keyword>
<keyword id="KW-0674">Reaction center</keyword>
<keyword id="KW-0793">Thylakoid</keyword>
<keyword id="KW-0812">Transmembrane</keyword>
<keyword id="KW-1133">Transmembrane helix</keyword>
<gene>
    <name evidence="1" type="primary">psbI</name>
</gene>
<geneLocation type="chloroplast"/>
<organism>
    <name type="scientific">Porphyra purpurea</name>
    <name type="common">Red seaweed</name>
    <name type="synonym">Ulva purpurea</name>
    <dbReference type="NCBI Taxonomy" id="2787"/>
    <lineage>
        <taxon>Eukaryota</taxon>
        <taxon>Rhodophyta</taxon>
        <taxon>Bangiophyceae</taxon>
        <taxon>Bangiales</taxon>
        <taxon>Bangiaceae</taxon>
        <taxon>Porphyra</taxon>
    </lineage>
</organism>
<feature type="chain" id="PRO_0000219647" description="Photosystem II reaction center protein I">
    <location>
        <begin position="1"/>
        <end position="38"/>
    </location>
</feature>
<feature type="transmembrane region" description="Helical" evidence="1">
    <location>
        <begin position="4"/>
        <end position="24"/>
    </location>
</feature>
<evidence type="ECO:0000255" key="1">
    <source>
        <dbReference type="HAMAP-Rule" id="MF_01316"/>
    </source>
</evidence>
<name>PSBI_PORPU</name>
<accession>P51236</accession>
<dbReference type="EMBL" id="U38804">
    <property type="protein sequence ID" value="AAC08122.1"/>
    <property type="molecule type" value="Genomic_DNA"/>
</dbReference>
<dbReference type="PIR" id="S73157">
    <property type="entry name" value="S73157"/>
</dbReference>
<dbReference type="RefSeq" id="NP_053846.1">
    <property type="nucleotide sequence ID" value="NC_000925.1"/>
</dbReference>
<dbReference type="SMR" id="P51236"/>
<dbReference type="GeneID" id="809865"/>
<dbReference type="GO" id="GO:0009535">
    <property type="term" value="C:chloroplast thylakoid membrane"/>
    <property type="evidence" value="ECO:0007669"/>
    <property type="project" value="UniProtKB-SubCell"/>
</dbReference>
<dbReference type="GO" id="GO:0009539">
    <property type="term" value="C:photosystem II reaction center"/>
    <property type="evidence" value="ECO:0007669"/>
    <property type="project" value="InterPro"/>
</dbReference>
<dbReference type="GO" id="GO:0015979">
    <property type="term" value="P:photosynthesis"/>
    <property type="evidence" value="ECO:0007669"/>
    <property type="project" value="UniProtKB-UniRule"/>
</dbReference>
<dbReference type="HAMAP" id="MF_01316">
    <property type="entry name" value="PSII_PsbI"/>
    <property type="match status" value="1"/>
</dbReference>
<dbReference type="InterPro" id="IPR003686">
    <property type="entry name" value="PSII_PsbI"/>
</dbReference>
<dbReference type="InterPro" id="IPR037271">
    <property type="entry name" value="PSII_PsbI_sf"/>
</dbReference>
<dbReference type="NCBIfam" id="NF002735">
    <property type="entry name" value="PRK02655.1"/>
    <property type="match status" value="1"/>
</dbReference>
<dbReference type="PANTHER" id="PTHR35772">
    <property type="entry name" value="PHOTOSYSTEM II REACTION CENTER PROTEIN I"/>
    <property type="match status" value="1"/>
</dbReference>
<dbReference type="PANTHER" id="PTHR35772:SF1">
    <property type="entry name" value="PHOTOSYSTEM II REACTION CENTER PROTEIN I"/>
    <property type="match status" value="1"/>
</dbReference>
<dbReference type="Pfam" id="PF02532">
    <property type="entry name" value="PsbI"/>
    <property type="match status" value="1"/>
</dbReference>
<dbReference type="SUPFAM" id="SSF161041">
    <property type="entry name" value="Photosystem II reaction center protein I, PsbI"/>
    <property type="match status" value="1"/>
</dbReference>